<organism>
    <name type="scientific">Salmonella schwarzengrund (strain CVM19633)</name>
    <dbReference type="NCBI Taxonomy" id="439843"/>
    <lineage>
        <taxon>Bacteria</taxon>
        <taxon>Pseudomonadati</taxon>
        <taxon>Pseudomonadota</taxon>
        <taxon>Gammaproteobacteria</taxon>
        <taxon>Enterobacterales</taxon>
        <taxon>Enterobacteriaceae</taxon>
        <taxon>Salmonella</taxon>
    </lineage>
</organism>
<name>RPPH_SALSV</name>
<reference key="1">
    <citation type="journal article" date="2011" name="J. Bacteriol.">
        <title>Comparative genomics of 28 Salmonella enterica isolates: evidence for CRISPR-mediated adaptive sublineage evolution.</title>
        <authorList>
            <person name="Fricke W.F."/>
            <person name="Mammel M.K."/>
            <person name="McDermott P.F."/>
            <person name="Tartera C."/>
            <person name="White D.G."/>
            <person name="Leclerc J.E."/>
            <person name="Ravel J."/>
            <person name="Cebula T.A."/>
        </authorList>
    </citation>
    <scope>NUCLEOTIDE SEQUENCE [LARGE SCALE GENOMIC DNA]</scope>
    <source>
        <strain>CVM19633</strain>
    </source>
</reference>
<gene>
    <name evidence="1" type="primary">rppH</name>
    <name evidence="1" type="synonym">nudH</name>
    <name type="ordered locus">SeSA_A3168</name>
</gene>
<evidence type="ECO:0000255" key="1">
    <source>
        <dbReference type="HAMAP-Rule" id="MF_00298"/>
    </source>
</evidence>
<feature type="chain" id="PRO_1000115298" description="RNA pyrophosphohydrolase">
    <location>
        <begin position="1"/>
        <end position="176"/>
    </location>
</feature>
<feature type="domain" description="Nudix hydrolase" evidence="1">
    <location>
        <begin position="6"/>
        <end position="149"/>
    </location>
</feature>
<feature type="short sequence motif" description="Nudix box">
    <location>
        <begin position="38"/>
        <end position="59"/>
    </location>
</feature>
<sequence length="176" mass="20806">MIDDDGYRPNVGIVICNRQGQVMWARRFGQHSWQFPQGGINPGESAEQAMYRELFEEVGLSRKDVRILASTRNWLRYKLPKRLVRWDTKPVCIGQKQKWFLLQLMSADAEINMQTSSTPEFDGWRWVSYWYPVRQVVSFKRDVYRRVMKEFASVVMALQDNPPKLQSAPAYRRKRG</sequence>
<dbReference type="EC" id="3.6.1.-" evidence="1"/>
<dbReference type="EMBL" id="CP001127">
    <property type="protein sequence ID" value="ACF89497.1"/>
    <property type="molecule type" value="Genomic_DNA"/>
</dbReference>
<dbReference type="RefSeq" id="WP_000564481.1">
    <property type="nucleotide sequence ID" value="NC_011094.1"/>
</dbReference>
<dbReference type="SMR" id="B4TUM2"/>
<dbReference type="KEGG" id="sew:SeSA_A3168"/>
<dbReference type="HOGENOM" id="CLU_087195_3_2_6"/>
<dbReference type="Proteomes" id="UP000001865">
    <property type="component" value="Chromosome"/>
</dbReference>
<dbReference type="GO" id="GO:0005737">
    <property type="term" value="C:cytoplasm"/>
    <property type="evidence" value="ECO:0007669"/>
    <property type="project" value="TreeGrafter"/>
</dbReference>
<dbReference type="GO" id="GO:0034353">
    <property type="term" value="F:mRNA 5'-diphosphatase activity"/>
    <property type="evidence" value="ECO:0007669"/>
    <property type="project" value="TreeGrafter"/>
</dbReference>
<dbReference type="GO" id="GO:0006402">
    <property type="term" value="P:mRNA catabolic process"/>
    <property type="evidence" value="ECO:0007669"/>
    <property type="project" value="TreeGrafter"/>
</dbReference>
<dbReference type="CDD" id="cd03671">
    <property type="entry name" value="NUDIX_Ap4A_hydrolase_plant_like"/>
    <property type="match status" value="1"/>
</dbReference>
<dbReference type="FunFam" id="3.90.79.10:FF:000001">
    <property type="entry name" value="RNA pyrophosphohydrolase"/>
    <property type="match status" value="1"/>
</dbReference>
<dbReference type="Gene3D" id="3.90.79.10">
    <property type="entry name" value="Nucleoside Triphosphate Pyrophosphohydrolase"/>
    <property type="match status" value="1"/>
</dbReference>
<dbReference type="HAMAP" id="MF_00298">
    <property type="entry name" value="Nudix_RppH"/>
    <property type="match status" value="1"/>
</dbReference>
<dbReference type="InterPro" id="IPR020476">
    <property type="entry name" value="Nudix_hydrolase"/>
</dbReference>
<dbReference type="InterPro" id="IPR015797">
    <property type="entry name" value="NUDIX_hydrolase-like_dom_sf"/>
</dbReference>
<dbReference type="InterPro" id="IPR020084">
    <property type="entry name" value="NUDIX_hydrolase_CS"/>
</dbReference>
<dbReference type="InterPro" id="IPR000086">
    <property type="entry name" value="NUDIX_hydrolase_dom"/>
</dbReference>
<dbReference type="InterPro" id="IPR022927">
    <property type="entry name" value="RppH"/>
</dbReference>
<dbReference type="NCBIfam" id="NF001934">
    <property type="entry name" value="PRK00714.1-1"/>
    <property type="match status" value="1"/>
</dbReference>
<dbReference type="NCBIfam" id="NF001937">
    <property type="entry name" value="PRK00714.1-4"/>
    <property type="match status" value="1"/>
</dbReference>
<dbReference type="NCBIfam" id="NF001938">
    <property type="entry name" value="PRK00714.1-5"/>
    <property type="match status" value="1"/>
</dbReference>
<dbReference type="PANTHER" id="PTHR23114">
    <property type="entry name" value="M7GPPPN-MRNA HYDROLASE"/>
    <property type="match status" value="1"/>
</dbReference>
<dbReference type="PANTHER" id="PTHR23114:SF17">
    <property type="entry name" value="M7GPPPN-MRNA HYDROLASE"/>
    <property type="match status" value="1"/>
</dbReference>
<dbReference type="Pfam" id="PF00293">
    <property type="entry name" value="NUDIX"/>
    <property type="match status" value="1"/>
</dbReference>
<dbReference type="PRINTS" id="PR00502">
    <property type="entry name" value="NUDIXFAMILY"/>
</dbReference>
<dbReference type="SUPFAM" id="SSF55811">
    <property type="entry name" value="Nudix"/>
    <property type="match status" value="1"/>
</dbReference>
<dbReference type="PROSITE" id="PS51462">
    <property type="entry name" value="NUDIX"/>
    <property type="match status" value="1"/>
</dbReference>
<dbReference type="PROSITE" id="PS00893">
    <property type="entry name" value="NUDIX_BOX"/>
    <property type="match status" value="1"/>
</dbReference>
<proteinExistence type="inferred from homology"/>
<comment type="function">
    <text evidence="1">Accelerates the degradation of transcripts by removing pyrophosphate from the 5'-end of triphosphorylated RNA, leading to a more labile monophosphorylated state that can stimulate subsequent ribonuclease cleavage.</text>
</comment>
<comment type="cofactor">
    <cofactor evidence="1">
        <name>a divalent metal cation</name>
        <dbReference type="ChEBI" id="CHEBI:60240"/>
    </cofactor>
</comment>
<comment type="similarity">
    <text evidence="1">Belongs to the Nudix hydrolase family. RppH subfamily.</text>
</comment>
<protein>
    <recommendedName>
        <fullName evidence="1">RNA pyrophosphohydrolase</fullName>
        <ecNumber evidence="1">3.6.1.-</ecNumber>
    </recommendedName>
    <alternativeName>
        <fullName evidence="1">(Di)nucleoside polyphosphate hydrolase</fullName>
    </alternativeName>
</protein>
<accession>B4TUM2</accession>
<keyword id="KW-0378">Hydrolase</keyword>